<proteinExistence type="inferred from homology"/>
<comment type="function">
    <text evidence="2">Cell wall formation.</text>
</comment>
<comment type="catalytic activity">
    <reaction evidence="2">
        <text>2 D-alanine + ATP = D-alanyl-D-alanine + ADP + phosphate + H(+)</text>
        <dbReference type="Rhea" id="RHEA:11224"/>
        <dbReference type="ChEBI" id="CHEBI:15378"/>
        <dbReference type="ChEBI" id="CHEBI:30616"/>
        <dbReference type="ChEBI" id="CHEBI:43474"/>
        <dbReference type="ChEBI" id="CHEBI:57416"/>
        <dbReference type="ChEBI" id="CHEBI:57822"/>
        <dbReference type="ChEBI" id="CHEBI:456216"/>
        <dbReference type="EC" id="6.3.2.4"/>
    </reaction>
</comment>
<comment type="cofactor">
    <cofactor evidence="1">
        <name>Mg(2+)</name>
        <dbReference type="ChEBI" id="CHEBI:18420"/>
    </cofactor>
    <cofactor evidence="1">
        <name>Mn(2+)</name>
        <dbReference type="ChEBI" id="CHEBI:29035"/>
    </cofactor>
    <text evidence="1">Binds 2 magnesium or manganese ions per subunit.</text>
</comment>
<comment type="pathway">
    <text evidence="2">Cell wall biogenesis; peptidoglycan biosynthesis.</text>
</comment>
<comment type="subcellular location">
    <subcellularLocation>
        <location evidence="2">Cytoplasm</location>
    </subcellularLocation>
</comment>
<comment type="similarity">
    <text evidence="2">Belongs to the D-alanine--D-alanine ligase family.</text>
</comment>
<comment type="sequence caution" evidence="3">
    <conflict type="erroneous initiation">
        <sequence resource="EMBL-CDS" id="AAM79691"/>
    </conflict>
</comment>
<organism>
    <name type="scientific">Streptococcus pyogenes serotype M3 (strain ATCC BAA-595 / MGAS315)</name>
    <dbReference type="NCBI Taxonomy" id="198466"/>
    <lineage>
        <taxon>Bacteria</taxon>
        <taxon>Bacillati</taxon>
        <taxon>Bacillota</taxon>
        <taxon>Bacilli</taxon>
        <taxon>Lactobacillales</taxon>
        <taxon>Streptococcaceae</taxon>
        <taxon>Streptococcus</taxon>
    </lineage>
</organism>
<sequence length="348" mass="38951">MSKQTLVLLYGGRSAEREVSVLSAESVMRAVNYDKFLVKTYFITQMGQFIKTQQFSEKPSESERLMTNETIELTQKIKPSDIYEEGAVVFPVLHGPMGEDGSIQGFLEVLRMPYIGTNVMSSSIAMDKITTKRVLESIGIPQVAYTVYIDGQDLEACLVETLARLTFPIFVKPANMGSSVGISKAQTKVELRKAIQLALTYDSRVLIEQGVVAREIEVGLLGNDKVKSTLPGEVIKDVDFYDYQAKYVDNKITMAIPADVDQSIVTEMRSYAEVAFKALGGCGLSRCDFFLTQDGQVYLNELNTMPGFTQWSMYPLLWENMGLAYPDLIEELVTLAQEIFDQRESHLI</sequence>
<accession>P0DA50</accession>
<accession>Q878Y1</accession>
<accession>Q8K6X7</accession>
<name>DDL_STRP3</name>
<dbReference type="EC" id="6.3.2.4" evidence="2"/>
<dbReference type="EMBL" id="AE014074">
    <property type="protein sequence ID" value="AAM79691.1"/>
    <property type="status" value="ALT_INIT"/>
    <property type="molecule type" value="Genomic_DNA"/>
</dbReference>
<dbReference type="RefSeq" id="WP_002983941.1">
    <property type="nucleotide sequence ID" value="NC_004070.1"/>
</dbReference>
<dbReference type="SMR" id="P0DA50"/>
<dbReference type="KEGG" id="spg:SpyM3_1084"/>
<dbReference type="HOGENOM" id="CLU_039268_0_0_9"/>
<dbReference type="UniPathway" id="UPA00219"/>
<dbReference type="Proteomes" id="UP000000564">
    <property type="component" value="Chromosome"/>
</dbReference>
<dbReference type="GO" id="GO:0005829">
    <property type="term" value="C:cytosol"/>
    <property type="evidence" value="ECO:0007669"/>
    <property type="project" value="TreeGrafter"/>
</dbReference>
<dbReference type="GO" id="GO:0005524">
    <property type="term" value="F:ATP binding"/>
    <property type="evidence" value="ECO:0007669"/>
    <property type="project" value="UniProtKB-KW"/>
</dbReference>
<dbReference type="GO" id="GO:0008716">
    <property type="term" value="F:D-alanine-D-alanine ligase activity"/>
    <property type="evidence" value="ECO:0007669"/>
    <property type="project" value="UniProtKB-UniRule"/>
</dbReference>
<dbReference type="GO" id="GO:0046872">
    <property type="term" value="F:metal ion binding"/>
    <property type="evidence" value="ECO:0007669"/>
    <property type="project" value="UniProtKB-KW"/>
</dbReference>
<dbReference type="GO" id="GO:0071555">
    <property type="term" value="P:cell wall organization"/>
    <property type="evidence" value="ECO:0007669"/>
    <property type="project" value="UniProtKB-KW"/>
</dbReference>
<dbReference type="GO" id="GO:0009252">
    <property type="term" value="P:peptidoglycan biosynthetic process"/>
    <property type="evidence" value="ECO:0007669"/>
    <property type="project" value="UniProtKB-UniRule"/>
</dbReference>
<dbReference type="GO" id="GO:0008360">
    <property type="term" value="P:regulation of cell shape"/>
    <property type="evidence" value="ECO:0007669"/>
    <property type="project" value="UniProtKB-KW"/>
</dbReference>
<dbReference type="FunFam" id="3.30.1490.20:FF:000007">
    <property type="entry name" value="D-alanine--D-alanine ligase"/>
    <property type="match status" value="1"/>
</dbReference>
<dbReference type="FunFam" id="3.30.470.20:FF:000008">
    <property type="entry name" value="D-alanine--D-alanine ligase"/>
    <property type="match status" value="1"/>
</dbReference>
<dbReference type="Gene3D" id="3.40.50.20">
    <property type="match status" value="1"/>
</dbReference>
<dbReference type="Gene3D" id="3.30.1490.20">
    <property type="entry name" value="ATP-grasp fold, A domain"/>
    <property type="match status" value="1"/>
</dbReference>
<dbReference type="Gene3D" id="3.30.470.20">
    <property type="entry name" value="ATP-grasp fold, B domain"/>
    <property type="match status" value="1"/>
</dbReference>
<dbReference type="HAMAP" id="MF_00047">
    <property type="entry name" value="Dala_Dala_lig"/>
    <property type="match status" value="1"/>
</dbReference>
<dbReference type="InterPro" id="IPR011761">
    <property type="entry name" value="ATP-grasp"/>
</dbReference>
<dbReference type="InterPro" id="IPR013815">
    <property type="entry name" value="ATP_grasp_subdomain_1"/>
</dbReference>
<dbReference type="InterPro" id="IPR000291">
    <property type="entry name" value="D-Ala_lig_Van_CS"/>
</dbReference>
<dbReference type="InterPro" id="IPR005905">
    <property type="entry name" value="D_ala_D_ala"/>
</dbReference>
<dbReference type="InterPro" id="IPR011095">
    <property type="entry name" value="Dala_Dala_lig_C"/>
</dbReference>
<dbReference type="InterPro" id="IPR011127">
    <property type="entry name" value="Dala_Dala_lig_N"/>
</dbReference>
<dbReference type="InterPro" id="IPR016185">
    <property type="entry name" value="PreATP-grasp_dom_sf"/>
</dbReference>
<dbReference type="NCBIfam" id="TIGR01205">
    <property type="entry name" value="D_ala_D_alaTIGR"/>
    <property type="match status" value="1"/>
</dbReference>
<dbReference type="NCBIfam" id="NF002528">
    <property type="entry name" value="PRK01966.1-4"/>
    <property type="match status" value="1"/>
</dbReference>
<dbReference type="NCBIfam" id="NF002529">
    <property type="entry name" value="PRK01966.1-5"/>
    <property type="match status" value="1"/>
</dbReference>
<dbReference type="PANTHER" id="PTHR23132">
    <property type="entry name" value="D-ALANINE--D-ALANINE LIGASE"/>
    <property type="match status" value="1"/>
</dbReference>
<dbReference type="PANTHER" id="PTHR23132:SF25">
    <property type="entry name" value="D-ALANINE--D-ALANINE LIGASE A"/>
    <property type="match status" value="1"/>
</dbReference>
<dbReference type="Pfam" id="PF07478">
    <property type="entry name" value="Dala_Dala_lig_C"/>
    <property type="match status" value="1"/>
</dbReference>
<dbReference type="Pfam" id="PF01820">
    <property type="entry name" value="Dala_Dala_lig_N"/>
    <property type="match status" value="1"/>
</dbReference>
<dbReference type="PIRSF" id="PIRSF039102">
    <property type="entry name" value="Ddl/VanB"/>
    <property type="match status" value="1"/>
</dbReference>
<dbReference type="SUPFAM" id="SSF56059">
    <property type="entry name" value="Glutathione synthetase ATP-binding domain-like"/>
    <property type="match status" value="1"/>
</dbReference>
<dbReference type="SUPFAM" id="SSF52440">
    <property type="entry name" value="PreATP-grasp domain"/>
    <property type="match status" value="1"/>
</dbReference>
<dbReference type="PROSITE" id="PS50975">
    <property type="entry name" value="ATP_GRASP"/>
    <property type="match status" value="1"/>
</dbReference>
<dbReference type="PROSITE" id="PS00843">
    <property type="entry name" value="DALA_DALA_LIGASE_1"/>
    <property type="match status" value="1"/>
</dbReference>
<dbReference type="PROSITE" id="PS00844">
    <property type="entry name" value="DALA_DALA_LIGASE_2"/>
    <property type="match status" value="1"/>
</dbReference>
<reference key="1">
    <citation type="journal article" date="2002" name="Proc. Natl. Acad. Sci. U.S.A.">
        <title>Genome sequence of a serotype M3 strain of group A Streptococcus: phage-encoded toxins, the high-virulence phenotype, and clone emergence.</title>
        <authorList>
            <person name="Beres S.B."/>
            <person name="Sylva G.L."/>
            <person name="Barbian K.D."/>
            <person name="Lei B."/>
            <person name="Hoff J.S."/>
            <person name="Mammarella N.D."/>
            <person name="Liu M.-Y."/>
            <person name="Smoot J.C."/>
            <person name="Porcella S.F."/>
            <person name="Parkins L.D."/>
            <person name="Campbell D.S."/>
            <person name="Smith T.M."/>
            <person name="McCormick J.K."/>
            <person name="Leung D.Y.M."/>
            <person name="Schlievert P.M."/>
            <person name="Musser J.M."/>
        </authorList>
    </citation>
    <scope>NUCLEOTIDE SEQUENCE [LARGE SCALE GENOMIC DNA]</scope>
    <source>
        <strain>ATCC BAA-595 / MGAS315</strain>
    </source>
</reference>
<evidence type="ECO:0000250" key="1"/>
<evidence type="ECO:0000255" key="2">
    <source>
        <dbReference type="HAMAP-Rule" id="MF_00047"/>
    </source>
</evidence>
<evidence type="ECO:0000305" key="3"/>
<protein>
    <recommendedName>
        <fullName evidence="2">D-alanine--D-alanine ligase</fullName>
        <ecNumber evidence="2">6.3.2.4</ecNumber>
    </recommendedName>
    <alternativeName>
        <fullName evidence="2">D-Ala-D-Ala ligase</fullName>
    </alternativeName>
    <alternativeName>
        <fullName evidence="2">D-alanylalanine synthetase</fullName>
    </alternativeName>
</protein>
<feature type="chain" id="PRO_0000177890" description="D-alanine--D-alanine ligase">
    <location>
        <begin position="1"/>
        <end position="348"/>
    </location>
</feature>
<feature type="domain" description="ATP-grasp" evidence="2">
    <location>
        <begin position="132"/>
        <end position="334"/>
    </location>
</feature>
<feature type="binding site" evidence="2">
    <location>
        <begin position="162"/>
        <end position="217"/>
    </location>
    <ligand>
        <name>ATP</name>
        <dbReference type="ChEBI" id="CHEBI:30616"/>
    </ligand>
</feature>
<feature type="binding site" evidence="2">
    <location>
        <position position="288"/>
    </location>
    <ligand>
        <name>Mg(2+)</name>
        <dbReference type="ChEBI" id="CHEBI:18420"/>
        <label>1</label>
    </ligand>
</feature>
<feature type="binding site" evidence="2">
    <location>
        <position position="301"/>
    </location>
    <ligand>
        <name>Mg(2+)</name>
        <dbReference type="ChEBI" id="CHEBI:18420"/>
        <label>1</label>
    </ligand>
</feature>
<feature type="binding site" evidence="2">
    <location>
        <position position="301"/>
    </location>
    <ligand>
        <name>Mg(2+)</name>
        <dbReference type="ChEBI" id="CHEBI:18420"/>
        <label>2</label>
    </ligand>
</feature>
<feature type="binding site" evidence="2">
    <location>
        <position position="303"/>
    </location>
    <ligand>
        <name>Mg(2+)</name>
        <dbReference type="ChEBI" id="CHEBI:18420"/>
        <label>2</label>
    </ligand>
</feature>
<gene>
    <name evidence="2" type="primary">ddl</name>
    <name type="synonym">ddlA</name>
    <name type="ordered locus">SpyM3_1084</name>
</gene>
<keyword id="KW-0067">ATP-binding</keyword>
<keyword id="KW-0133">Cell shape</keyword>
<keyword id="KW-0961">Cell wall biogenesis/degradation</keyword>
<keyword id="KW-0963">Cytoplasm</keyword>
<keyword id="KW-0436">Ligase</keyword>
<keyword id="KW-0460">Magnesium</keyword>
<keyword id="KW-0464">Manganese</keyword>
<keyword id="KW-0479">Metal-binding</keyword>
<keyword id="KW-0547">Nucleotide-binding</keyword>
<keyword id="KW-0573">Peptidoglycan synthesis</keyword>